<dbReference type="EMBL" id="AK024611">
    <property type="protein sequence ID" value="BAB14934.1"/>
    <property type="molecule type" value="mRNA"/>
</dbReference>
<dbReference type="EMBL" id="AL023583">
    <property type="status" value="NOT_ANNOTATED_CDS"/>
    <property type="molecule type" value="Genomic_DNA"/>
</dbReference>
<dbReference type="EMBL" id="BC008234">
    <property type="protein sequence ID" value="AAH08234.1"/>
    <property type="molecule type" value="mRNA"/>
</dbReference>
<dbReference type="EMBL" id="BC016850">
    <property type="protein sequence ID" value="AAH16850.1"/>
    <property type="molecule type" value="mRNA"/>
</dbReference>
<dbReference type="CCDS" id="CCDS35495.1">
    <molecule id="Q96AQ8-1"/>
</dbReference>
<dbReference type="RefSeq" id="NP_001026883.1">
    <molecule id="Q96AQ8-1"/>
    <property type="nucleotide sequence ID" value="NM_001031713.4"/>
</dbReference>
<dbReference type="SMR" id="Q96AQ8"/>
<dbReference type="BioGRID" id="122001">
    <property type="interactions" value="190"/>
</dbReference>
<dbReference type="DIP" id="DIP-61861N"/>
<dbReference type="FunCoup" id="Q96AQ8">
    <property type="interactions" value="757"/>
</dbReference>
<dbReference type="IntAct" id="Q96AQ8">
    <property type="interactions" value="6"/>
</dbReference>
<dbReference type="STRING" id="9606.ENSP00000368468"/>
<dbReference type="iPTMnet" id="Q96AQ8"/>
<dbReference type="PhosphoSitePlus" id="Q96AQ8"/>
<dbReference type="BioMuta" id="MCUR1"/>
<dbReference type="DMDM" id="74751750"/>
<dbReference type="jPOST" id="Q96AQ8"/>
<dbReference type="MassIVE" id="Q96AQ8"/>
<dbReference type="PaxDb" id="9606-ENSP00000368468"/>
<dbReference type="PeptideAtlas" id="Q96AQ8"/>
<dbReference type="ProteomicsDB" id="75993">
    <molecule id="Q96AQ8-1"/>
</dbReference>
<dbReference type="ProteomicsDB" id="75994">
    <molecule id="Q96AQ8-2"/>
</dbReference>
<dbReference type="Pumba" id="Q96AQ8"/>
<dbReference type="TopDownProteomics" id="Q96AQ8-1">
    <molecule id="Q96AQ8-1"/>
</dbReference>
<dbReference type="Antibodypedia" id="25007">
    <property type="antibodies" value="70 antibodies from 19 providers"/>
</dbReference>
<dbReference type="DNASU" id="63933"/>
<dbReference type="Ensembl" id="ENST00000379170.9">
    <molecule id="Q96AQ8-1"/>
    <property type="protein sequence ID" value="ENSP00000368468.3"/>
    <property type="gene ID" value="ENSG00000050393.12"/>
</dbReference>
<dbReference type="Ensembl" id="ENST00000488770.1">
    <molecule id="Q96AQ8-2"/>
    <property type="protein sequence ID" value="ENSP00000476162.1"/>
    <property type="gene ID" value="ENSG00000050393.12"/>
</dbReference>
<dbReference type="GeneID" id="63933"/>
<dbReference type="KEGG" id="hsa:63933"/>
<dbReference type="MANE-Select" id="ENST00000379170.9">
    <property type="protein sequence ID" value="ENSP00000368468.3"/>
    <property type="RefSeq nucleotide sequence ID" value="NM_001031713.4"/>
    <property type="RefSeq protein sequence ID" value="NP_001026883.1"/>
</dbReference>
<dbReference type="UCSC" id="uc003nbc.3">
    <molecule id="Q96AQ8-1"/>
    <property type="organism name" value="human"/>
</dbReference>
<dbReference type="AGR" id="HGNC:21097"/>
<dbReference type="CTD" id="63933"/>
<dbReference type="DisGeNET" id="63933"/>
<dbReference type="GeneCards" id="MCUR1"/>
<dbReference type="HGNC" id="HGNC:21097">
    <property type="gene designation" value="MCUR1"/>
</dbReference>
<dbReference type="HPA" id="ENSG00000050393">
    <property type="expression patterns" value="Tissue enhanced (retina)"/>
</dbReference>
<dbReference type="MalaCards" id="MCUR1"/>
<dbReference type="MIM" id="616952">
    <property type="type" value="gene"/>
</dbReference>
<dbReference type="neXtProt" id="NX_Q96AQ8"/>
<dbReference type="OpenTargets" id="ENSG00000050393"/>
<dbReference type="PharmGKB" id="PA162381944"/>
<dbReference type="VEuPathDB" id="HostDB:ENSG00000050393"/>
<dbReference type="eggNOG" id="KOG3156">
    <property type="taxonomic scope" value="Eukaryota"/>
</dbReference>
<dbReference type="GeneTree" id="ENSGT00940000158957"/>
<dbReference type="HOGENOM" id="CLU_791208_0_0_1"/>
<dbReference type="InParanoid" id="Q96AQ8"/>
<dbReference type="OMA" id="LASSSRX"/>
<dbReference type="OrthoDB" id="889336at2759"/>
<dbReference type="PAN-GO" id="Q96AQ8">
    <property type="GO annotations" value="4 GO annotations based on evolutionary models"/>
</dbReference>
<dbReference type="PhylomeDB" id="Q96AQ8"/>
<dbReference type="TreeFam" id="TF331442"/>
<dbReference type="PathwayCommons" id="Q96AQ8"/>
<dbReference type="SignaLink" id="Q96AQ8"/>
<dbReference type="BioGRID-ORCS" id="63933">
    <property type="hits" value="22 hits in 1155 CRISPR screens"/>
</dbReference>
<dbReference type="ChiTaRS" id="MCUR1">
    <property type="organism name" value="human"/>
</dbReference>
<dbReference type="GenomeRNAi" id="63933"/>
<dbReference type="Pharos" id="Q96AQ8">
    <property type="development level" value="Tbio"/>
</dbReference>
<dbReference type="PRO" id="PR:Q96AQ8"/>
<dbReference type="Proteomes" id="UP000005640">
    <property type="component" value="Chromosome 6"/>
</dbReference>
<dbReference type="RNAct" id="Q96AQ8">
    <property type="molecule type" value="protein"/>
</dbReference>
<dbReference type="Bgee" id="ENSG00000050393">
    <property type="expression patterns" value="Expressed in jejunal mucosa and 206 other cell types or tissues"/>
</dbReference>
<dbReference type="ExpressionAtlas" id="Q96AQ8">
    <property type="expression patterns" value="baseline and differential"/>
</dbReference>
<dbReference type="GO" id="GO:0005743">
    <property type="term" value="C:mitochondrial inner membrane"/>
    <property type="evidence" value="ECO:0000314"/>
    <property type="project" value="UniProtKB"/>
</dbReference>
<dbReference type="GO" id="GO:0005739">
    <property type="term" value="C:mitochondrion"/>
    <property type="evidence" value="ECO:0006056"/>
    <property type="project" value="FlyBase"/>
</dbReference>
<dbReference type="GO" id="GO:0036444">
    <property type="term" value="P:calcium import into the mitochondrion"/>
    <property type="evidence" value="ECO:0000315"/>
    <property type="project" value="UniProtKB"/>
</dbReference>
<dbReference type="GO" id="GO:0070509">
    <property type="term" value="P:calcium ion import"/>
    <property type="evidence" value="ECO:0000315"/>
    <property type="project" value="UniProtKB"/>
</dbReference>
<dbReference type="GO" id="GO:0006851">
    <property type="term" value="P:mitochondrial calcium ion transmembrane transport"/>
    <property type="evidence" value="ECO:0000315"/>
    <property type="project" value="UniProtKB"/>
</dbReference>
<dbReference type="GO" id="GO:0051561">
    <property type="term" value="P:positive regulation of mitochondrial calcium ion concentration"/>
    <property type="evidence" value="ECO:0000315"/>
    <property type="project" value="UniProtKB"/>
</dbReference>
<dbReference type="FunFam" id="1.20.5.340:FF:000015">
    <property type="entry name" value="Mitochondrial calcium uniporter regulator 1"/>
    <property type="match status" value="1"/>
</dbReference>
<dbReference type="Gene3D" id="1.20.5.340">
    <property type="match status" value="1"/>
</dbReference>
<dbReference type="InterPro" id="IPR024461">
    <property type="entry name" value="CCDC90-like"/>
</dbReference>
<dbReference type="PANTHER" id="PTHR14360:SF11">
    <property type="entry name" value="MITOCHONDRIAL CALCIUM UNIPORTER REGULATOR 1"/>
    <property type="match status" value="1"/>
</dbReference>
<dbReference type="PANTHER" id="PTHR14360">
    <property type="entry name" value="PROTEIN FMP32, MITOCHONDRIAL"/>
    <property type="match status" value="1"/>
</dbReference>
<dbReference type="Pfam" id="PF07798">
    <property type="entry name" value="CCDC90-like"/>
    <property type="match status" value="1"/>
</dbReference>
<organism>
    <name type="scientific">Homo sapiens</name>
    <name type="common">Human</name>
    <dbReference type="NCBI Taxonomy" id="9606"/>
    <lineage>
        <taxon>Eukaryota</taxon>
        <taxon>Metazoa</taxon>
        <taxon>Chordata</taxon>
        <taxon>Craniata</taxon>
        <taxon>Vertebrata</taxon>
        <taxon>Euteleostomi</taxon>
        <taxon>Mammalia</taxon>
        <taxon>Eutheria</taxon>
        <taxon>Euarchontoglires</taxon>
        <taxon>Primates</taxon>
        <taxon>Haplorrhini</taxon>
        <taxon>Catarrhini</taxon>
        <taxon>Hominidae</taxon>
        <taxon>Homo</taxon>
    </lineage>
</organism>
<name>MCUR1_HUMAN</name>
<evidence type="ECO:0000255" key="1"/>
<evidence type="ECO:0000269" key="2">
    <source>
    </source>
</evidence>
<evidence type="ECO:0000269" key="3">
    <source>
    </source>
</evidence>
<evidence type="ECO:0000269" key="4">
    <source>
    </source>
</evidence>
<evidence type="ECO:0000269" key="5">
    <source>
    </source>
</evidence>
<evidence type="ECO:0000269" key="6">
    <source>
    </source>
</evidence>
<evidence type="ECO:0000269" key="7">
    <source>
    </source>
</evidence>
<evidence type="ECO:0000269" key="8">
    <source>
    </source>
</evidence>
<evidence type="ECO:0000303" key="9">
    <source>
    </source>
</evidence>
<evidence type="ECO:0000303" key="10">
    <source>
    </source>
</evidence>
<evidence type="ECO:0000305" key="11"/>
<evidence type="ECO:0000305" key="12">
    <source>
    </source>
</evidence>
<evidence type="ECO:0000312" key="13">
    <source>
        <dbReference type="HGNC" id="HGNC:21097"/>
    </source>
</evidence>
<accession>Q96AQ8</accession>
<accession>Q96JS7</accession>
<accession>Q9H7F8</accession>
<keyword id="KW-0025">Alternative splicing</keyword>
<keyword id="KW-0106">Calcium</keyword>
<keyword id="KW-0109">Calcium transport</keyword>
<keyword id="KW-0175">Coiled coil</keyword>
<keyword id="KW-0406">Ion transport</keyword>
<keyword id="KW-0472">Membrane</keyword>
<keyword id="KW-0496">Mitochondrion</keyword>
<keyword id="KW-0999">Mitochondrion inner membrane</keyword>
<keyword id="KW-1267">Proteomics identification</keyword>
<keyword id="KW-1185">Reference proteome</keyword>
<keyword id="KW-0812">Transmembrane</keyword>
<keyword id="KW-1133">Transmembrane helix</keyword>
<keyword id="KW-0813">Transport</keyword>
<comment type="function">
    <text evidence="3 6 7 8">Key regulator of mitochondrial calcium uniporter (MCU) required for calcium entry into mitochondrion (PubMed:23178883, PubMed:26445506, PubMed:26976564, PubMed:27184846). Plays a direct role in uniporter-mediated calcium uptake via a direct interaction with MCU (PubMed:23178883). Probably involved in the assembly of the membrane components of the uniporter complex (uniplex) (PubMed:27184846).</text>
</comment>
<comment type="subunit">
    <text evidence="3 5 7 8">Interacts (via coiled coil regions) with MCU; the interaction is direct (PubMed:23178883, PubMed:26341627, PubMed:26976564, PubMed:27184846). Interacts with SMDT1/EMRE; the interaction is direct (PubMed:27184846). Interacts with PPIF (PubMed:26976564).</text>
</comment>
<comment type="interaction">
    <interactant intactId="EBI-14404755">
        <id>Q96AQ8</id>
    </interactant>
    <interactant intactId="EBI-713148">
        <id>Q9GZT6</id>
        <label>CCDC90B</label>
    </interactant>
    <organismsDiffer>false</organismsDiffer>
    <experiments>2</experiments>
</comment>
<comment type="interaction">
    <interactant intactId="EBI-14404755">
        <id>Q96AQ8</id>
    </interactant>
    <interactant intactId="EBI-6269566">
        <id>P23786</id>
        <label>CPT2</label>
    </interactant>
    <organismsDiffer>false</organismsDiffer>
    <experiments>2</experiments>
</comment>
<comment type="interaction">
    <interactant intactId="EBI-14404755">
        <id>Q96AQ8</id>
    </interactant>
    <interactant intactId="EBI-15932889">
        <id>Q8NE86-1</id>
        <label>MCU</label>
    </interactant>
    <organismsDiffer>false</organismsDiffer>
    <experiments>4</experiments>
</comment>
<comment type="subcellular location">
    <subcellularLocation>
        <location evidence="3">Mitochondrion inner membrane</location>
        <topology evidence="3">Multi-pass membrane protein</topology>
    </subcellularLocation>
</comment>
<comment type="alternative products">
    <event type="alternative splicing"/>
    <isoform>
        <id>Q96AQ8-1</id>
        <name>1</name>
        <sequence type="displayed"/>
    </isoform>
    <isoform>
        <id>Q96AQ8-2</id>
        <name>2</name>
        <sequence type="described" ref="VSP_026998 VSP_026999"/>
    </isoform>
</comment>
<comment type="tissue specificity">
    <text evidence="3">Ubiquitously expressed.</text>
</comment>
<comment type="similarity">
    <text evidence="11">Belongs to the CCDC90 family.</text>
</comment>
<comment type="caution">
    <text evidence="4 6 8">A paper reported that MCUR1 has an indirect role as a regulator of mitochondrial calcium uniporter (MCU) and is involved in cytochrome c oxidase (COX) assembly instead (PubMed:25565209). Subsequent publications however confirmed the function of MCUR1 as a regulator of MCU (PubMed:26445506, PubMed:27184846).</text>
</comment>
<proteinExistence type="evidence at protein level"/>
<reference key="1">
    <citation type="journal article" date="2004" name="Nat. Genet.">
        <title>Complete sequencing and characterization of 21,243 full-length human cDNAs.</title>
        <authorList>
            <person name="Ota T."/>
            <person name="Suzuki Y."/>
            <person name="Nishikawa T."/>
            <person name="Otsuki T."/>
            <person name="Sugiyama T."/>
            <person name="Irie R."/>
            <person name="Wakamatsu A."/>
            <person name="Hayashi K."/>
            <person name="Sato H."/>
            <person name="Nagai K."/>
            <person name="Kimura K."/>
            <person name="Makita H."/>
            <person name="Sekine M."/>
            <person name="Obayashi M."/>
            <person name="Nishi T."/>
            <person name="Shibahara T."/>
            <person name="Tanaka T."/>
            <person name="Ishii S."/>
            <person name="Yamamoto J."/>
            <person name="Saito K."/>
            <person name="Kawai Y."/>
            <person name="Isono Y."/>
            <person name="Nakamura Y."/>
            <person name="Nagahari K."/>
            <person name="Murakami K."/>
            <person name="Yasuda T."/>
            <person name="Iwayanagi T."/>
            <person name="Wagatsuma M."/>
            <person name="Shiratori A."/>
            <person name="Sudo H."/>
            <person name="Hosoiri T."/>
            <person name="Kaku Y."/>
            <person name="Kodaira H."/>
            <person name="Kondo H."/>
            <person name="Sugawara M."/>
            <person name="Takahashi M."/>
            <person name="Kanda K."/>
            <person name="Yokoi T."/>
            <person name="Furuya T."/>
            <person name="Kikkawa E."/>
            <person name="Omura Y."/>
            <person name="Abe K."/>
            <person name="Kamihara K."/>
            <person name="Katsuta N."/>
            <person name="Sato K."/>
            <person name="Tanikawa M."/>
            <person name="Yamazaki M."/>
            <person name="Ninomiya K."/>
            <person name="Ishibashi T."/>
            <person name="Yamashita H."/>
            <person name="Murakawa K."/>
            <person name="Fujimori K."/>
            <person name="Tanai H."/>
            <person name="Kimata M."/>
            <person name="Watanabe M."/>
            <person name="Hiraoka S."/>
            <person name="Chiba Y."/>
            <person name="Ishida S."/>
            <person name="Ono Y."/>
            <person name="Takiguchi S."/>
            <person name="Watanabe S."/>
            <person name="Yosida M."/>
            <person name="Hotuta T."/>
            <person name="Kusano J."/>
            <person name="Kanehori K."/>
            <person name="Takahashi-Fujii A."/>
            <person name="Hara H."/>
            <person name="Tanase T.-O."/>
            <person name="Nomura Y."/>
            <person name="Togiya S."/>
            <person name="Komai F."/>
            <person name="Hara R."/>
            <person name="Takeuchi K."/>
            <person name="Arita M."/>
            <person name="Imose N."/>
            <person name="Musashino K."/>
            <person name="Yuuki H."/>
            <person name="Oshima A."/>
            <person name="Sasaki N."/>
            <person name="Aotsuka S."/>
            <person name="Yoshikawa Y."/>
            <person name="Matsunawa H."/>
            <person name="Ichihara T."/>
            <person name="Shiohata N."/>
            <person name="Sano S."/>
            <person name="Moriya S."/>
            <person name="Momiyama H."/>
            <person name="Satoh N."/>
            <person name="Takami S."/>
            <person name="Terashima Y."/>
            <person name="Suzuki O."/>
            <person name="Nakagawa S."/>
            <person name="Senoh A."/>
            <person name="Mizoguchi H."/>
            <person name="Goto Y."/>
            <person name="Shimizu F."/>
            <person name="Wakebe H."/>
            <person name="Hishigaki H."/>
            <person name="Watanabe T."/>
            <person name="Sugiyama A."/>
            <person name="Takemoto M."/>
            <person name="Kawakami B."/>
            <person name="Yamazaki M."/>
            <person name="Watanabe K."/>
            <person name="Kumagai A."/>
            <person name="Itakura S."/>
            <person name="Fukuzumi Y."/>
            <person name="Fujimori Y."/>
            <person name="Komiyama M."/>
            <person name="Tashiro H."/>
            <person name="Tanigami A."/>
            <person name="Fujiwara T."/>
            <person name="Ono T."/>
            <person name="Yamada K."/>
            <person name="Fujii Y."/>
            <person name="Ozaki K."/>
            <person name="Hirao M."/>
            <person name="Ohmori Y."/>
            <person name="Kawabata A."/>
            <person name="Hikiji T."/>
            <person name="Kobatake N."/>
            <person name="Inagaki H."/>
            <person name="Ikema Y."/>
            <person name="Okamoto S."/>
            <person name="Okitani R."/>
            <person name="Kawakami T."/>
            <person name="Noguchi S."/>
            <person name="Itoh T."/>
            <person name="Shigeta K."/>
            <person name="Senba T."/>
            <person name="Matsumura K."/>
            <person name="Nakajima Y."/>
            <person name="Mizuno T."/>
            <person name="Morinaga M."/>
            <person name="Sasaki M."/>
            <person name="Togashi T."/>
            <person name="Oyama M."/>
            <person name="Hata H."/>
            <person name="Watanabe M."/>
            <person name="Komatsu T."/>
            <person name="Mizushima-Sugano J."/>
            <person name="Satoh T."/>
            <person name="Shirai Y."/>
            <person name="Takahashi Y."/>
            <person name="Nakagawa K."/>
            <person name="Okumura K."/>
            <person name="Nagase T."/>
            <person name="Nomura N."/>
            <person name="Kikuchi H."/>
            <person name="Masuho Y."/>
            <person name="Yamashita R."/>
            <person name="Nakai K."/>
            <person name="Yada T."/>
            <person name="Nakamura Y."/>
            <person name="Ohara O."/>
            <person name="Isogai T."/>
            <person name="Sugano S."/>
        </authorList>
    </citation>
    <scope>NUCLEOTIDE SEQUENCE [LARGE SCALE MRNA] (ISOFORM 2)</scope>
    <scope>VARIANT GLY-108</scope>
    <source>
        <tissue>Adipose tissue</tissue>
    </source>
</reference>
<reference key="2">
    <citation type="journal article" date="2003" name="Nature">
        <title>The DNA sequence and analysis of human chromosome 6.</title>
        <authorList>
            <person name="Mungall A.J."/>
            <person name="Palmer S.A."/>
            <person name="Sims S.K."/>
            <person name="Edwards C.A."/>
            <person name="Ashurst J.L."/>
            <person name="Wilming L."/>
            <person name="Jones M.C."/>
            <person name="Horton R."/>
            <person name="Hunt S.E."/>
            <person name="Scott C.E."/>
            <person name="Gilbert J.G.R."/>
            <person name="Clamp M.E."/>
            <person name="Bethel G."/>
            <person name="Milne S."/>
            <person name="Ainscough R."/>
            <person name="Almeida J.P."/>
            <person name="Ambrose K.D."/>
            <person name="Andrews T.D."/>
            <person name="Ashwell R.I.S."/>
            <person name="Babbage A.K."/>
            <person name="Bagguley C.L."/>
            <person name="Bailey J."/>
            <person name="Banerjee R."/>
            <person name="Barker D.J."/>
            <person name="Barlow K.F."/>
            <person name="Bates K."/>
            <person name="Beare D.M."/>
            <person name="Beasley H."/>
            <person name="Beasley O."/>
            <person name="Bird C.P."/>
            <person name="Blakey S.E."/>
            <person name="Bray-Allen S."/>
            <person name="Brook J."/>
            <person name="Brown A.J."/>
            <person name="Brown J.Y."/>
            <person name="Burford D.C."/>
            <person name="Burrill W."/>
            <person name="Burton J."/>
            <person name="Carder C."/>
            <person name="Carter N.P."/>
            <person name="Chapman J.C."/>
            <person name="Clark S.Y."/>
            <person name="Clark G."/>
            <person name="Clee C.M."/>
            <person name="Clegg S."/>
            <person name="Cobley V."/>
            <person name="Collier R.E."/>
            <person name="Collins J.E."/>
            <person name="Colman L.K."/>
            <person name="Corby N.R."/>
            <person name="Coville G.J."/>
            <person name="Culley K.M."/>
            <person name="Dhami P."/>
            <person name="Davies J."/>
            <person name="Dunn M."/>
            <person name="Earthrowl M.E."/>
            <person name="Ellington A.E."/>
            <person name="Evans K.A."/>
            <person name="Faulkner L."/>
            <person name="Francis M.D."/>
            <person name="Frankish A."/>
            <person name="Frankland J."/>
            <person name="French L."/>
            <person name="Garner P."/>
            <person name="Garnett J."/>
            <person name="Ghori M.J."/>
            <person name="Gilby L.M."/>
            <person name="Gillson C.J."/>
            <person name="Glithero R.J."/>
            <person name="Grafham D.V."/>
            <person name="Grant M."/>
            <person name="Gribble S."/>
            <person name="Griffiths C."/>
            <person name="Griffiths M.N.D."/>
            <person name="Hall R."/>
            <person name="Halls K.S."/>
            <person name="Hammond S."/>
            <person name="Harley J.L."/>
            <person name="Hart E.A."/>
            <person name="Heath P.D."/>
            <person name="Heathcott R."/>
            <person name="Holmes S.J."/>
            <person name="Howden P.J."/>
            <person name="Howe K.L."/>
            <person name="Howell G.R."/>
            <person name="Huckle E."/>
            <person name="Humphray S.J."/>
            <person name="Humphries M.D."/>
            <person name="Hunt A.R."/>
            <person name="Johnson C.M."/>
            <person name="Joy A.A."/>
            <person name="Kay M."/>
            <person name="Keenan S.J."/>
            <person name="Kimberley A.M."/>
            <person name="King A."/>
            <person name="Laird G.K."/>
            <person name="Langford C."/>
            <person name="Lawlor S."/>
            <person name="Leongamornlert D.A."/>
            <person name="Leversha M."/>
            <person name="Lloyd C.R."/>
            <person name="Lloyd D.M."/>
            <person name="Loveland J.E."/>
            <person name="Lovell J."/>
            <person name="Martin S."/>
            <person name="Mashreghi-Mohammadi M."/>
            <person name="Maslen G.L."/>
            <person name="Matthews L."/>
            <person name="McCann O.T."/>
            <person name="McLaren S.J."/>
            <person name="McLay K."/>
            <person name="McMurray A."/>
            <person name="Moore M.J.F."/>
            <person name="Mullikin J.C."/>
            <person name="Niblett D."/>
            <person name="Nickerson T."/>
            <person name="Novik K.L."/>
            <person name="Oliver K."/>
            <person name="Overton-Larty E.K."/>
            <person name="Parker A."/>
            <person name="Patel R."/>
            <person name="Pearce A.V."/>
            <person name="Peck A.I."/>
            <person name="Phillimore B.J.C.T."/>
            <person name="Phillips S."/>
            <person name="Plumb R.W."/>
            <person name="Porter K.M."/>
            <person name="Ramsey Y."/>
            <person name="Ranby S.A."/>
            <person name="Rice C.M."/>
            <person name="Ross M.T."/>
            <person name="Searle S.M."/>
            <person name="Sehra H.K."/>
            <person name="Sheridan E."/>
            <person name="Skuce C.D."/>
            <person name="Smith S."/>
            <person name="Smith M."/>
            <person name="Spraggon L."/>
            <person name="Squares S.L."/>
            <person name="Steward C.A."/>
            <person name="Sycamore N."/>
            <person name="Tamlyn-Hall G."/>
            <person name="Tester J."/>
            <person name="Theaker A.J."/>
            <person name="Thomas D.W."/>
            <person name="Thorpe A."/>
            <person name="Tracey A."/>
            <person name="Tromans A."/>
            <person name="Tubby B."/>
            <person name="Wall M."/>
            <person name="Wallis J.M."/>
            <person name="West A.P."/>
            <person name="White S.S."/>
            <person name="Whitehead S.L."/>
            <person name="Whittaker H."/>
            <person name="Wild A."/>
            <person name="Willey D.J."/>
            <person name="Wilmer T.E."/>
            <person name="Wood J.M."/>
            <person name="Wray P.W."/>
            <person name="Wyatt J.C."/>
            <person name="Young L."/>
            <person name="Younger R.M."/>
            <person name="Bentley D.R."/>
            <person name="Coulson A."/>
            <person name="Durbin R.M."/>
            <person name="Hubbard T."/>
            <person name="Sulston J.E."/>
            <person name="Dunham I."/>
            <person name="Rogers J."/>
            <person name="Beck S."/>
        </authorList>
    </citation>
    <scope>NUCLEOTIDE SEQUENCE [LARGE SCALE GENOMIC DNA]</scope>
</reference>
<reference key="3">
    <citation type="journal article" date="2004" name="Genome Res.">
        <title>The status, quality, and expansion of the NIH full-length cDNA project: the Mammalian Gene Collection (MGC).</title>
        <authorList>
            <consortium name="The MGC Project Team"/>
        </authorList>
    </citation>
    <scope>NUCLEOTIDE SEQUENCE [LARGE SCALE MRNA] (ISOFORM 1)</scope>
    <source>
        <tissue>Lung</tissue>
        <tissue>Ovary</tissue>
    </source>
</reference>
<reference key="4">
    <citation type="journal article" date="2012" name="Nat. Cell Biol.">
        <title>MCUR1 is an essential component of mitochondrial Ca(2+) uptake that regulates cellular metabolism.</title>
        <authorList>
            <person name="Mallilankaraman K."/>
            <person name="Cardenas C."/>
            <person name="Doonan P.J."/>
            <person name="Chandramoorthy H.C."/>
            <person name="Irrinki K.M."/>
            <person name="Golenar T."/>
            <person name="Csordas G."/>
            <person name="Madireddi P."/>
            <person name="Yang J."/>
            <person name="Muller M."/>
            <person name="Miller R."/>
            <person name="Kolesar J.E."/>
            <person name="Molgo J."/>
            <person name="Kaufman B."/>
            <person name="Hajnoczky G."/>
            <person name="Foskett J.K."/>
            <person name="Madesh M."/>
        </authorList>
    </citation>
    <scope>FUNCTION</scope>
    <scope>SUBCELLULAR LOCATION</scope>
    <scope>TISSUE SPECIFICITY</scope>
    <scope>TOPOLOGY</scope>
    <scope>INTERACTION WITH MCU</scope>
</reference>
<reference key="5">
    <citation type="journal article" date="2015" name="EMBO Rep.">
        <title>Structure and function of the N-terminal domain of the human mitochondrial calcium uniporter.</title>
        <authorList>
            <person name="Lee Y."/>
            <person name="Min C.K."/>
            <person name="Kim T.G."/>
            <person name="Song H.K."/>
            <person name="Lim Y."/>
            <person name="Kim D."/>
            <person name="Shin K."/>
            <person name="Kang M."/>
            <person name="Kang J.Y."/>
            <person name="Youn H.S."/>
            <person name="Lee J.G."/>
            <person name="An J.Y."/>
            <person name="Park K.R."/>
            <person name="Lim J.J."/>
            <person name="Kim J.H."/>
            <person name="Kim J.H."/>
            <person name="Park Z.Y."/>
            <person name="Kim Y.S."/>
            <person name="Wang J."/>
            <person name="Kim D.H."/>
            <person name="Eom S.H."/>
        </authorList>
    </citation>
    <scope>INTERACTION WITH MCU</scope>
</reference>
<reference key="6">
    <citation type="journal article" date="2015" name="Cell Metab.">
        <title>CCDC90A (MCUR1) is a cytochrome c oxidase assembly factor and not a regulator of the mitochondrial calcium uniporter.</title>
        <authorList>
            <person name="Paupe V."/>
            <person name="Prudent J."/>
            <person name="Dassa E.P."/>
            <person name="Rendon O.Z."/>
            <person name="Shoubridge E.A."/>
        </authorList>
    </citation>
    <scope>POSSIBLE FUNCTION IN CYTOCHROME C OXIDASE ASSEMBLY</scope>
</reference>
<reference key="7">
    <citation type="journal article" date="2015" name="Cell Metab.">
        <title>MCUR1, CCDC90A, is a regulator of the mitochondrial calcium uniporter.</title>
        <authorList>
            <person name="Vais H."/>
            <person name="Tanis J.E."/>
            <person name="Mueller M."/>
            <person name="Payne R."/>
            <person name="Mallilankaraman K."/>
            <person name="Foskett J.K."/>
        </authorList>
    </citation>
    <scope>FUNCTION</scope>
</reference>
<reference key="8">
    <citation type="journal article" date="2015" name="Proteomics">
        <title>N-terminome analysis of the human mitochondrial proteome.</title>
        <authorList>
            <person name="Vaca Jacome A.S."/>
            <person name="Rabilloud T."/>
            <person name="Schaeffer-Reiss C."/>
            <person name="Rompais M."/>
            <person name="Ayoub D."/>
            <person name="Lane L."/>
            <person name="Bairoch A."/>
            <person name="Van Dorsselaer A."/>
            <person name="Carapito C."/>
        </authorList>
    </citation>
    <scope>IDENTIFICATION BY MASS SPECTROMETRY [LARGE SCALE ANALYSIS]</scope>
</reference>
<reference key="9">
    <citation type="journal article" date="2016" name="Cell Rep.">
        <title>MCUR1 is a scaffold factor for the MCU complex function and promotes mitochondrial bioenergetics.</title>
        <authorList>
            <person name="Tomar D."/>
            <person name="Dong Z."/>
            <person name="Shanmughapriya S."/>
            <person name="Koch D.A."/>
            <person name="Thomas T."/>
            <person name="Hoffman N.E."/>
            <person name="Timbalia S.A."/>
            <person name="Goldman S.J."/>
            <person name="Breves S.L."/>
            <person name="Corbally D.P."/>
            <person name="Nemani N."/>
            <person name="Fairweather J.P."/>
            <person name="Cutri A.R."/>
            <person name="Zhang X."/>
            <person name="Song J."/>
            <person name="Jana F."/>
            <person name="Huang J."/>
            <person name="Barrero C."/>
            <person name="Rabinowitz J.E."/>
            <person name="Luongo T.S."/>
            <person name="Schumacher S.M."/>
            <person name="Rockman M.E."/>
            <person name="Dietrich A."/>
            <person name="Merali S."/>
            <person name="Caplan J."/>
            <person name="Stathopulos P."/>
            <person name="Ahima R.S."/>
            <person name="Cheung J.Y."/>
            <person name="Houser S.R."/>
            <person name="Koch W.J."/>
            <person name="Patel V."/>
            <person name="Gohil V.M."/>
            <person name="Elrod J.W."/>
            <person name="Rajan S."/>
            <person name="Madesh M."/>
        </authorList>
    </citation>
    <scope>FUNCTION</scope>
    <scope>INTERACTION WITH SMDT1/EMRE AND MCU</scope>
</reference>
<reference key="10">
    <citation type="journal article" date="2016" name="Proc. Natl. Acad. Sci. U.S.A.">
        <title>Mitochondrial calcium uniporter regulator 1 (MCUR1) regulates the calcium threshold for the mitochondrial permeability transition.</title>
        <authorList>
            <person name="Chaudhuri D."/>
            <person name="Artiga D.J."/>
            <person name="Abiria S.A."/>
            <person name="Clapham D.E."/>
        </authorList>
    </citation>
    <scope>FUNCTION</scope>
    <scope>INTERACTION WITH MCU AND PPIF</scope>
</reference>
<protein>
    <recommendedName>
        <fullName evidence="10">Mitochondrial calcium uniporter regulator 1</fullName>
        <shortName evidence="10">MCU regulator 1</shortName>
    </recommendedName>
    <alternativeName>
        <fullName evidence="11">Coiled-coil domain-containing protein 90A, mitochondrial</fullName>
    </alternativeName>
</protein>
<feature type="chain" id="PRO_0000295692" description="Mitochondrial calcium uniporter regulator 1">
    <location>
        <begin position="1"/>
        <end position="359"/>
    </location>
</feature>
<feature type="topological domain" description="Mitochondrial intermembrane" evidence="12">
    <location>
        <begin position="1"/>
        <end position="68"/>
    </location>
</feature>
<feature type="transmembrane region" description="Helical" evidence="1">
    <location>
        <begin position="69"/>
        <end position="85"/>
    </location>
</feature>
<feature type="topological domain" description="Mitochondrial matrix" evidence="12">
    <location>
        <begin position="86"/>
        <end position="338"/>
    </location>
</feature>
<feature type="transmembrane region" description="Helical" evidence="1">
    <location>
        <begin position="339"/>
        <end position="358"/>
    </location>
</feature>
<feature type="topological domain" description="Mitochondrial intermembrane" evidence="12">
    <location>
        <position position="359"/>
    </location>
</feature>
<feature type="coiled-coil region" evidence="1">
    <location>
        <begin position="235"/>
        <end position="310"/>
    </location>
</feature>
<feature type="splice variant" id="VSP_026998" description="In isoform 2." evidence="9">
    <original>GFATQQAEIIVSALVKILEANMDIVYKDMVTKMQQEITFQQVMSQIANVKKDMIILEKSEFSALRAENEKIKLELHQLK</original>
    <variation>ESHSFIQAGVQWHSLGLLQPPPPGFKRSSHLILLSSWDYRHAPPHLDNFSVFLLETGFHHVGQAGLKLLTSSDPPTLAS</variation>
    <location>
        <begin position="179"/>
        <end position="257"/>
    </location>
</feature>
<feature type="splice variant" id="VSP_026999" description="In isoform 2." evidence="9">
    <location>
        <begin position="258"/>
        <end position="359"/>
    </location>
</feature>
<feature type="sequence variant" id="VAR_033320" description="In dbSNP:rs1204145." evidence="2">
    <original>S</original>
    <variation>G</variation>
    <location>
        <position position="108"/>
    </location>
</feature>
<feature type="sequence variant" id="VAR_033321" description="In dbSNP:rs3180196.">
    <original>T</original>
    <variation>A</variation>
    <location>
        <position position="216"/>
    </location>
</feature>
<feature type="sequence conflict" description="In Ref. 1; BAB14934." evidence="11" ref="1">
    <original>L</original>
    <variation>P</variation>
    <location>
        <position position="42"/>
    </location>
</feature>
<feature type="sequence conflict" description="In Ref. 3; AAH08234." evidence="11" ref="3">
    <original>R</original>
    <variation>W</variation>
    <location>
        <position position="309"/>
    </location>
</feature>
<gene>
    <name evidence="10" type="primary">MCUR1</name>
    <name evidence="13" type="synonym">C6orf79</name>
    <name evidence="13" type="synonym">CCDC90A</name>
</gene>
<sequence length="359" mass="39694">MDCGSVGGQRTQRLPGRQRLLFLPVGLSGRPGGSETSARRCLSALSDGLGALRPRAPAARGGVSRASPLLLLLLVPSPRLAAAAPRRQLGDWERSRLGYAAPPAGRSSAWRCSPGVAAAAGALPQYHGPAPALVSCRRELSLSAGSLQLERKRRDFTSSGSRKLYFDTHALVCLLEDNGFATQQAEIIVSALVKILEANMDIVYKDMVTKMQQEITFQQVMSQIANVKKDMIILEKSEFSALRAENEKIKLELHQLKQQVMDEVIKVRTDTKLDFNLEKSRVKELYSLNEKKLLELRTEIVALHAQQDRALTQTDRKIETEVAGLKTMLESHKLDNIKYLAGSIFTCLTVALGFYRLWI</sequence>